<accession>Q08AH3</accession>
<accession>B3KTT9</accession>
<accession>O75202</accession>
<name>ACS2A_HUMAN</name>
<evidence type="ECO:0000250" key="1">
    <source>
        <dbReference type="UniProtKB" id="Q68CK6"/>
    </source>
</evidence>
<evidence type="ECO:0000255" key="2"/>
<evidence type="ECO:0000269" key="3">
    <source>
    </source>
</evidence>
<evidence type="ECO:0000269" key="4">
    <source>
    </source>
</evidence>
<evidence type="ECO:0000269" key="5">
    <source>
    </source>
</evidence>
<evidence type="ECO:0000269" key="6">
    <source>
    </source>
</evidence>
<evidence type="ECO:0000269" key="7">
    <source ref="7"/>
</evidence>
<evidence type="ECO:0000305" key="8"/>
<evidence type="ECO:0007829" key="9">
    <source>
        <dbReference type="PDB" id="3B7W"/>
    </source>
</evidence>
<evidence type="ECO:0007829" key="10">
    <source>
        <dbReference type="PDB" id="3C5E"/>
    </source>
</evidence>
<comment type="function">
    <text evidence="1">Catalyzes the activation of fatty acids by CoA to produce an acyl-CoA, the first step in fatty acid metabolism (By similarity). Capable of activating medium-chain fatty acids (e.g. butyric (C4) to decanoic (C10) acids), and certain carboxylate-containing xenobiotics, e.g. benzoate (By similarity).</text>
</comment>
<comment type="catalytic activity">
    <reaction evidence="1">
        <text>a medium-chain fatty acid + ATP + CoA = a medium-chain fatty acyl-CoA + AMP + diphosphate</text>
        <dbReference type="Rhea" id="RHEA:48340"/>
        <dbReference type="ChEBI" id="CHEBI:30616"/>
        <dbReference type="ChEBI" id="CHEBI:33019"/>
        <dbReference type="ChEBI" id="CHEBI:57287"/>
        <dbReference type="ChEBI" id="CHEBI:59558"/>
        <dbReference type="ChEBI" id="CHEBI:90546"/>
        <dbReference type="ChEBI" id="CHEBI:456215"/>
        <dbReference type="EC" id="6.2.1.2"/>
    </reaction>
    <physiologicalReaction direction="left-to-right" evidence="1">
        <dbReference type="Rhea" id="RHEA:48341"/>
    </physiologicalReaction>
</comment>
<comment type="catalytic activity">
    <reaction evidence="1">
        <text>benzoate + ATP + CoA = benzoyl-CoA + AMP + diphosphate</text>
        <dbReference type="Rhea" id="RHEA:10132"/>
        <dbReference type="ChEBI" id="CHEBI:16150"/>
        <dbReference type="ChEBI" id="CHEBI:30616"/>
        <dbReference type="ChEBI" id="CHEBI:33019"/>
        <dbReference type="ChEBI" id="CHEBI:57287"/>
        <dbReference type="ChEBI" id="CHEBI:57369"/>
        <dbReference type="ChEBI" id="CHEBI:456215"/>
        <dbReference type="EC" id="6.2.1.25"/>
    </reaction>
    <physiologicalReaction direction="left-to-right" evidence="1">
        <dbReference type="Rhea" id="RHEA:10133"/>
    </physiologicalReaction>
</comment>
<comment type="catalytic activity">
    <reaction evidence="1">
        <text>hexanoate + ATP + CoA = hexanoyl-CoA + AMP + diphosphate</text>
        <dbReference type="Rhea" id="RHEA:43740"/>
        <dbReference type="ChEBI" id="CHEBI:17120"/>
        <dbReference type="ChEBI" id="CHEBI:30616"/>
        <dbReference type="ChEBI" id="CHEBI:33019"/>
        <dbReference type="ChEBI" id="CHEBI:57287"/>
        <dbReference type="ChEBI" id="CHEBI:62620"/>
        <dbReference type="ChEBI" id="CHEBI:456215"/>
    </reaction>
    <physiologicalReaction direction="left-to-right" evidence="1">
        <dbReference type="Rhea" id="RHEA:43741"/>
    </physiologicalReaction>
</comment>
<comment type="catalytic activity">
    <reaction evidence="1">
        <text>butanoate + ATP + CoA = butanoyl-CoA + AMP + diphosphate</text>
        <dbReference type="Rhea" id="RHEA:46172"/>
        <dbReference type="ChEBI" id="CHEBI:17968"/>
        <dbReference type="ChEBI" id="CHEBI:30616"/>
        <dbReference type="ChEBI" id="CHEBI:33019"/>
        <dbReference type="ChEBI" id="CHEBI:57287"/>
        <dbReference type="ChEBI" id="CHEBI:57371"/>
        <dbReference type="ChEBI" id="CHEBI:456215"/>
    </reaction>
    <physiologicalReaction direction="left-to-right" evidence="1">
        <dbReference type="Rhea" id="RHEA:46173"/>
    </physiologicalReaction>
</comment>
<comment type="catalytic activity">
    <reaction evidence="1">
        <text>octanoate + ATP + CoA = octanoyl-CoA + AMP + diphosphate</text>
        <dbReference type="Rhea" id="RHEA:33631"/>
        <dbReference type="ChEBI" id="CHEBI:25646"/>
        <dbReference type="ChEBI" id="CHEBI:30616"/>
        <dbReference type="ChEBI" id="CHEBI:33019"/>
        <dbReference type="ChEBI" id="CHEBI:57287"/>
        <dbReference type="ChEBI" id="CHEBI:57386"/>
        <dbReference type="ChEBI" id="CHEBI:456215"/>
    </reaction>
    <physiologicalReaction direction="left-to-right" evidence="1">
        <dbReference type="Rhea" id="RHEA:33632"/>
    </physiologicalReaction>
</comment>
<comment type="catalytic activity">
    <reaction evidence="1">
        <text>decanoate + ATP + CoA = decanoyl-CoA + AMP + diphosphate</text>
        <dbReference type="Rhea" id="RHEA:33627"/>
        <dbReference type="ChEBI" id="CHEBI:27689"/>
        <dbReference type="ChEBI" id="CHEBI:30616"/>
        <dbReference type="ChEBI" id="CHEBI:33019"/>
        <dbReference type="ChEBI" id="CHEBI:57287"/>
        <dbReference type="ChEBI" id="CHEBI:61430"/>
        <dbReference type="ChEBI" id="CHEBI:456215"/>
    </reaction>
    <physiologicalReaction direction="left-to-right" evidence="1">
        <dbReference type="Rhea" id="RHEA:33628"/>
    </physiologicalReaction>
</comment>
<comment type="cofactor">
    <cofactor evidence="6 7">
        <name>Mg(2+)</name>
        <dbReference type="ChEBI" id="CHEBI:18420"/>
    </cofactor>
    <cofactor evidence="6 7">
        <name>Mn(2+)</name>
        <dbReference type="ChEBI" id="CHEBI:29035"/>
    </cofactor>
</comment>
<comment type="subunit">
    <text evidence="1">Monomer.</text>
</comment>
<comment type="subcellular location">
    <subcellularLocation>
        <location evidence="1">Mitochondrion</location>
    </subcellularLocation>
</comment>
<comment type="similarity">
    <text evidence="8">Belongs to the ATP-dependent AMP-binding enzyme family.</text>
</comment>
<comment type="sequence caution" evidence="8">
    <conflict type="erroneous gene model prediction">
        <sequence resource="EMBL-CDS" id="AAC23497"/>
    </conflict>
</comment>
<keyword id="KW-0002">3D-structure</keyword>
<keyword id="KW-0067">ATP-binding</keyword>
<keyword id="KW-0276">Fatty acid metabolism</keyword>
<keyword id="KW-0436">Ligase</keyword>
<keyword id="KW-0443">Lipid metabolism</keyword>
<keyword id="KW-0460">Magnesium</keyword>
<keyword id="KW-0479">Metal-binding</keyword>
<keyword id="KW-0496">Mitochondrion</keyword>
<keyword id="KW-0547">Nucleotide-binding</keyword>
<keyword id="KW-0597">Phosphoprotein</keyword>
<keyword id="KW-1267">Proteomics identification</keyword>
<keyword id="KW-1185">Reference proteome</keyword>
<keyword id="KW-0809">Transit peptide</keyword>
<organism>
    <name type="scientific">Homo sapiens</name>
    <name type="common">Human</name>
    <dbReference type="NCBI Taxonomy" id="9606"/>
    <lineage>
        <taxon>Eukaryota</taxon>
        <taxon>Metazoa</taxon>
        <taxon>Chordata</taxon>
        <taxon>Craniata</taxon>
        <taxon>Vertebrata</taxon>
        <taxon>Euteleostomi</taxon>
        <taxon>Mammalia</taxon>
        <taxon>Eutheria</taxon>
        <taxon>Euarchontoglires</taxon>
        <taxon>Primates</taxon>
        <taxon>Haplorrhini</taxon>
        <taxon>Catarrhini</taxon>
        <taxon>Hominidae</taxon>
        <taxon>Homo</taxon>
    </lineage>
</organism>
<gene>
    <name type="primary">ACSM2A</name>
    <name type="synonym">ACSM2</name>
    <name type="synonym">MACS2</name>
</gene>
<proteinExistence type="evidence at protein level"/>
<dbReference type="EC" id="6.2.1.2" evidence="1"/>
<dbReference type="EC" id="6.2.1.25" evidence="1"/>
<dbReference type="EMBL" id="AK096039">
    <property type="protein sequence ID" value="BAG53201.1"/>
    <property type="molecule type" value="mRNA"/>
</dbReference>
<dbReference type="EMBL" id="AC137056">
    <property type="status" value="NOT_ANNOTATED_CDS"/>
    <property type="molecule type" value="Genomic_DNA"/>
</dbReference>
<dbReference type="EMBL" id="BC125176">
    <property type="protein sequence ID" value="AAI25177.1"/>
    <property type="molecule type" value="mRNA"/>
</dbReference>
<dbReference type="EMBL" id="AC003034">
    <property type="protein sequence ID" value="AAC23497.1"/>
    <property type="status" value="ALT_SEQ"/>
    <property type="molecule type" value="Genomic_DNA"/>
</dbReference>
<dbReference type="CCDS" id="CCDS32401.1"/>
<dbReference type="RefSeq" id="NP_001295101.1">
    <property type="nucleotide sequence ID" value="NM_001308172.2"/>
</dbReference>
<dbReference type="RefSeq" id="NP_001295883.1">
    <property type="nucleotide sequence ID" value="NM_001308954.2"/>
</dbReference>
<dbReference type="RefSeq" id="XP_016878412.1">
    <property type="nucleotide sequence ID" value="XM_017022923.2"/>
</dbReference>
<dbReference type="RefSeq" id="XP_047289547.1">
    <property type="nucleotide sequence ID" value="XM_047433591.1"/>
</dbReference>
<dbReference type="PDB" id="2VZE">
    <property type="method" value="X-ray"/>
    <property type="resolution" value="2.45 A"/>
    <property type="chains" value="A/B/C=32-577"/>
</dbReference>
<dbReference type="PDB" id="2WD9">
    <property type="method" value="X-ray"/>
    <property type="resolution" value="2.60 A"/>
    <property type="chains" value="A/B/C=32-576"/>
</dbReference>
<dbReference type="PDB" id="3B7W">
    <property type="method" value="X-ray"/>
    <property type="resolution" value="2.00 A"/>
    <property type="chains" value="A=32-577"/>
</dbReference>
<dbReference type="PDB" id="3C5E">
    <property type="method" value="X-ray"/>
    <property type="resolution" value="1.60 A"/>
    <property type="chains" value="A=32-577"/>
</dbReference>
<dbReference type="PDB" id="3DAY">
    <property type="method" value="X-ray"/>
    <property type="resolution" value="1.95 A"/>
    <property type="chains" value="A=32-577"/>
</dbReference>
<dbReference type="PDB" id="3EQ6">
    <property type="method" value="X-ray"/>
    <property type="resolution" value="2.40 A"/>
    <property type="chains" value="A/B=32-577"/>
</dbReference>
<dbReference type="PDB" id="3GPC">
    <property type="method" value="X-ray"/>
    <property type="resolution" value="1.90 A"/>
    <property type="chains" value="A/B=32-577"/>
</dbReference>
<dbReference type="PDBsum" id="2VZE"/>
<dbReference type="PDBsum" id="2WD9"/>
<dbReference type="PDBsum" id="3B7W"/>
<dbReference type="PDBsum" id="3C5E"/>
<dbReference type="PDBsum" id="3DAY"/>
<dbReference type="PDBsum" id="3EQ6"/>
<dbReference type="PDBsum" id="3GPC"/>
<dbReference type="SMR" id="Q08AH3"/>
<dbReference type="BioGRID" id="125840">
    <property type="interactions" value="3"/>
</dbReference>
<dbReference type="FunCoup" id="Q08AH3">
    <property type="interactions" value="28"/>
</dbReference>
<dbReference type="IntAct" id="Q08AH3">
    <property type="interactions" value="2"/>
</dbReference>
<dbReference type="MINT" id="Q08AH3"/>
<dbReference type="STRING" id="9606.ENSP00000459451"/>
<dbReference type="GlyGen" id="Q08AH3">
    <property type="glycosylation" value="1 site"/>
</dbReference>
<dbReference type="iPTMnet" id="Q08AH3"/>
<dbReference type="PhosphoSitePlus" id="Q08AH3"/>
<dbReference type="BioMuta" id="ACSM2A"/>
<dbReference type="DMDM" id="257050995"/>
<dbReference type="jPOST" id="Q08AH3"/>
<dbReference type="MassIVE" id="Q08AH3"/>
<dbReference type="PaxDb" id="9606-ENSP00000459451"/>
<dbReference type="PeptideAtlas" id="Q08AH3"/>
<dbReference type="ProteomicsDB" id="58672"/>
<dbReference type="Antibodypedia" id="67877">
    <property type="antibodies" value="84 antibodies from 20 providers"/>
</dbReference>
<dbReference type="DNASU" id="123876"/>
<dbReference type="Ensembl" id="ENST00000219054.10">
    <property type="protein sequence ID" value="ENSP00000219054.6"/>
    <property type="gene ID" value="ENSG00000183747.12"/>
</dbReference>
<dbReference type="Ensembl" id="ENST00000396104.2">
    <property type="protein sequence ID" value="ENSP00000379411.2"/>
    <property type="gene ID" value="ENSG00000183747.12"/>
</dbReference>
<dbReference type="Ensembl" id="ENST00000573854.6">
    <property type="protein sequence ID" value="ENSP00000459451.1"/>
    <property type="gene ID" value="ENSG00000183747.12"/>
</dbReference>
<dbReference type="Ensembl" id="ENST00000575690.5">
    <property type="protein sequence ID" value="ENSP00000460349.1"/>
    <property type="gene ID" value="ENSG00000183747.12"/>
</dbReference>
<dbReference type="GeneID" id="123876"/>
<dbReference type="KEGG" id="hsa:123876"/>
<dbReference type="MANE-Select" id="ENST00000573854.6">
    <property type="protein sequence ID" value="ENSP00000459451.1"/>
    <property type="RefSeq nucleotide sequence ID" value="NM_001308172.2"/>
    <property type="RefSeq protein sequence ID" value="NP_001295101.1"/>
</dbReference>
<dbReference type="UCSC" id="uc002dhf.5">
    <property type="organism name" value="human"/>
</dbReference>
<dbReference type="AGR" id="HGNC:32017"/>
<dbReference type="CTD" id="123876"/>
<dbReference type="DisGeNET" id="123876"/>
<dbReference type="GeneCards" id="ACSM2A"/>
<dbReference type="HGNC" id="HGNC:32017">
    <property type="gene designation" value="ACSM2A"/>
</dbReference>
<dbReference type="HPA" id="ENSG00000183747">
    <property type="expression patterns" value="Group enriched (kidney, liver)"/>
</dbReference>
<dbReference type="MIM" id="614358">
    <property type="type" value="gene"/>
</dbReference>
<dbReference type="neXtProt" id="NX_Q08AH3"/>
<dbReference type="OpenTargets" id="ENSG00000183747"/>
<dbReference type="PharmGKB" id="PA162375402"/>
<dbReference type="VEuPathDB" id="HostDB:ENSG00000183747"/>
<dbReference type="eggNOG" id="KOG1175">
    <property type="taxonomic scope" value="Eukaryota"/>
</dbReference>
<dbReference type="GeneTree" id="ENSGT00940000164294"/>
<dbReference type="InParanoid" id="Q08AH3"/>
<dbReference type="OMA" id="MGPTRKG"/>
<dbReference type="OrthoDB" id="6614653at2759"/>
<dbReference type="PAN-GO" id="Q08AH3">
    <property type="GO annotations" value="5 GO annotations based on evolutionary models"/>
</dbReference>
<dbReference type="PhylomeDB" id="Q08AH3"/>
<dbReference type="TreeFam" id="TF354264"/>
<dbReference type="PathwayCommons" id="Q08AH3"/>
<dbReference type="Reactome" id="R-HSA-177128">
    <property type="pathway name" value="Conjugation of salicylate with glycine"/>
</dbReference>
<dbReference type="Reactome" id="R-HSA-9749641">
    <property type="pathway name" value="Aspirin ADME"/>
</dbReference>
<dbReference type="SignaLink" id="Q08AH3"/>
<dbReference type="BioGRID-ORCS" id="123876">
    <property type="hits" value="7 hits in 1097 CRISPR screens"/>
</dbReference>
<dbReference type="ChiTaRS" id="ACSM2A">
    <property type="organism name" value="human"/>
</dbReference>
<dbReference type="EvolutionaryTrace" id="Q08AH3"/>
<dbReference type="GenomeRNAi" id="123876"/>
<dbReference type="Pharos" id="Q08AH3">
    <property type="development level" value="Tbio"/>
</dbReference>
<dbReference type="PRO" id="PR:Q08AH3"/>
<dbReference type="Proteomes" id="UP000005640">
    <property type="component" value="Chromosome 16"/>
</dbReference>
<dbReference type="RNAct" id="Q08AH3">
    <property type="molecule type" value="protein"/>
</dbReference>
<dbReference type="Bgee" id="ENSG00000183747">
    <property type="expression patterns" value="Expressed in right lobe of liver and 95 other cell types or tissues"/>
</dbReference>
<dbReference type="ExpressionAtlas" id="Q08AH3">
    <property type="expression patterns" value="baseline and differential"/>
</dbReference>
<dbReference type="GO" id="GO:0005759">
    <property type="term" value="C:mitochondrial matrix"/>
    <property type="evidence" value="ECO:0000318"/>
    <property type="project" value="GO_Central"/>
</dbReference>
<dbReference type="GO" id="GO:0005739">
    <property type="term" value="C:mitochondrion"/>
    <property type="evidence" value="ECO:0006056"/>
    <property type="project" value="FlyBase"/>
</dbReference>
<dbReference type="GO" id="GO:0005524">
    <property type="term" value="F:ATP binding"/>
    <property type="evidence" value="ECO:0007669"/>
    <property type="project" value="UniProtKB-KW"/>
</dbReference>
<dbReference type="GO" id="GO:0018858">
    <property type="term" value="F:benzoate-CoA ligase activity"/>
    <property type="evidence" value="ECO:0000250"/>
    <property type="project" value="UniProtKB"/>
</dbReference>
<dbReference type="GO" id="GO:0102391">
    <property type="term" value="F:decanoate-CoA ligase activity"/>
    <property type="evidence" value="ECO:0007669"/>
    <property type="project" value="RHEA"/>
</dbReference>
<dbReference type="GO" id="GO:0015645">
    <property type="term" value="F:fatty acid ligase activity"/>
    <property type="evidence" value="ECO:0000318"/>
    <property type="project" value="GO_Central"/>
</dbReference>
<dbReference type="GO" id="GO:0004321">
    <property type="term" value="F:fatty-acyl-CoA synthase activity"/>
    <property type="evidence" value="ECO:0000318"/>
    <property type="project" value="GO_Central"/>
</dbReference>
<dbReference type="GO" id="GO:0031956">
    <property type="term" value="F:medium-chain fatty acid-CoA ligase activity"/>
    <property type="evidence" value="ECO:0000314"/>
    <property type="project" value="BHF-UCL"/>
</dbReference>
<dbReference type="GO" id="GO:0046872">
    <property type="term" value="F:metal ion binding"/>
    <property type="evidence" value="ECO:0007669"/>
    <property type="project" value="UniProtKB-KW"/>
</dbReference>
<dbReference type="GO" id="GO:0006637">
    <property type="term" value="P:acyl-CoA metabolic process"/>
    <property type="evidence" value="ECO:0000318"/>
    <property type="project" value="GO_Central"/>
</dbReference>
<dbReference type="GO" id="GO:0006633">
    <property type="term" value="P:fatty acid biosynthetic process"/>
    <property type="evidence" value="ECO:0000318"/>
    <property type="project" value="GO_Central"/>
</dbReference>
<dbReference type="GO" id="GO:0042593">
    <property type="term" value="P:glucose homeostasis"/>
    <property type="evidence" value="ECO:0000303"/>
    <property type="project" value="BHF-UCL"/>
</dbReference>
<dbReference type="GO" id="GO:0036112">
    <property type="term" value="P:medium-chain fatty-acyl-CoA metabolic process"/>
    <property type="evidence" value="ECO:0000314"/>
    <property type="project" value="BHF-UCL"/>
</dbReference>
<dbReference type="GO" id="GO:0070328">
    <property type="term" value="P:triglyceride homeostasis"/>
    <property type="evidence" value="ECO:0000303"/>
    <property type="project" value="BHF-UCL"/>
</dbReference>
<dbReference type="FunFam" id="3.40.50.12780:FF:000007">
    <property type="entry name" value="Acyl-coenzyme A synthetase ACSM2A, mitochondrial"/>
    <property type="match status" value="1"/>
</dbReference>
<dbReference type="FunFam" id="3.30.300.30:FF:000005">
    <property type="entry name" value="Acyl-coenzyme A synthetase ACSM5, mitochondrial"/>
    <property type="match status" value="1"/>
</dbReference>
<dbReference type="Gene3D" id="3.30.300.30">
    <property type="match status" value="1"/>
</dbReference>
<dbReference type="Gene3D" id="3.40.50.12780">
    <property type="entry name" value="N-terminal domain of ligase-like"/>
    <property type="match status" value="1"/>
</dbReference>
<dbReference type="InterPro" id="IPR025110">
    <property type="entry name" value="AMP-bd_C"/>
</dbReference>
<dbReference type="InterPro" id="IPR045851">
    <property type="entry name" value="AMP-bd_C_sf"/>
</dbReference>
<dbReference type="InterPro" id="IPR020845">
    <property type="entry name" value="AMP-binding_CS"/>
</dbReference>
<dbReference type="InterPro" id="IPR000873">
    <property type="entry name" value="AMP-dep_synth/lig_dom"/>
</dbReference>
<dbReference type="InterPro" id="IPR042099">
    <property type="entry name" value="ANL_N_sf"/>
</dbReference>
<dbReference type="InterPro" id="IPR051087">
    <property type="entry name" value="Mitochondrial_ACSM"/>
</dbReference>
<dbReference type="PANTHER" id="PTHR43605">
    <property type="entry name" value="ACYL-COENZYME A SYNTHETASE"/>
    <property type="match status" value="1"/>
</dbReference>
<dbReference type="PANTHER" id="PTHR43605:SF14">
    <property type="entry name" value="ACYL-COENZYME A SYNTHETASE ACSM2A, MITOCHONDRIAL"/>
    <property type="match status" value="1"/>
</dbReference>
<dbReference type="Pfam" id="PF00501">
    <property type="entry name" value="AMP-binding"/>
    <property type="match status" value="1"/>
</dbReference>
<dbReference type="Pfam" id="PF13193">
    <property type="entry name" value="AMP-binding_C"/>
    <property type="match status" value="1"/>
</dbReference>
<dbReference type="SUPFAM" id="SSF56801">
    <property type="entry name" value="Acetyl-CoA synthetase-like"/>
    <property type="match status" value="1"/>
</dbReference>
<dbReference type="PROSITE" id="PS00455">
    <property type="entry name" value="AMP_BINDING"/>
    <property type="match status" value="1"/>
</dbReference>
<feature type="transit peptide" description="Mitochondrion" evidence="2">
    <location>
        <begin position="1"/>
        <end position="46"/>
    </location>
</feature>
<feature type="chain" id="PRO_0000306093" description="Acyl-coenzyme A synthetase ACSM2A, mitochondrial">
    <location>
        <begin position="47"/>
        <end position="577"/>
    </location>
</feature>
<feature type="binding site" evidence="6">
    <location>
        <position position="139"/>
    </location>
    <ligand>
        <name>CoA</name>
        <dbReference type="ChEBI" id="CHEBI:57287"/>
    </ligand>
</feature>
<feature type="binding site" evidence="6 7">
    <location>
        <begin position="221"/>
        <end position="229"/>
    </location>
    <ligand>
        <name>ATP</name>
        <dbReference type="ChEBI" id="CHEBI:30616"/>
    </ligand>
</feature>
<feature type="binding site" evidence="6 7">
    <location>
        <begin position="359"/>
        <end position="364"/>
    </location>
    <ligand>
        <name>ATP</name>
        <dbReference type="ChEBI" id="CHEBI:30616"/>
    </ligand>
</feature>
<feature type="binding site" evidence="6">
    <location>
        <position position="364"/>
    </location>
    <ligand>
        <name>substrate</name>
    </ligand>
</feature>
<feature type="binding site" evidence="6 7">
    <location>
        <position position="446"/>
    </location>
    <ligand>
        <name>ATP</name>
        <dbReference type="ChEBI" id="CHEBI:30616"/>
    </ligand>
</feature>
<feature type="binding site" evidence="6 7">
    <location>
        <position position="461"/>
    </location>
    <ligand>
        <name>ATP</name>
        <dbReference type="ChEBI" id="CHEBI:30616"/>
    </ligand>
</feature>
<feature type="binding site" evidence="6">
    <location>
        <begin position="469"/>
        <end position="471"/>
    </location>
    <ligand>
        <name>CoA</name>
        <dbReference type="ChEBI" id="CHEBI:57287"/>
    </ligand>
</feature>
<feature type="binding site" evidence="6">
    <location>
        <position position="472"/>
    </location>
    <ligand>
        <name>substrate</name>
    </ligand>
</feature>
<feature type="binding site" evidence="6">
    <location>
        <position position="501"/>
    </location>
    <ligand>
        <name>CoA</name>
        <dbReference type="ChEBI" id="CHEBI:57287"/>
    </ligand>
</feature>
<feature type="binding site" evidence="6">
    <location>
        <position position="532"/>
    </location>
    <ligand>
        <name>CoA</name>
        <dbReference type="ChEBI" id="CHEBI:57287"/>
    </ligand>
</feature>
<feature type="binding site" evidence="6">
    <location>
        <begin position="540"/>
        <end position="542"/>
    </location>
    <ligand>
        <name>CoA</name>
        <dbReference type="ChEBI" id="CHEBI:57287"/>
    </ligand>
</feature>
<feature type="binding site" evidence="6 7">
    <location>
        <position position="557"/>
    </location>
    <ligand>
        <name>ATP</name>
        <dbReference type="ChEBI" id="CHEBI:30616"/>
    </ligand>
</feature>
<feature type="modified residue" description="Phosphoserine" evidence="1">
    <location>
        <position position="513"/>
    </location>
</feature>
<feature type="sequence variant" id="VAR_058692" description="In dbSNP:rs4643305.">
    <original>V</original>
    <variation>L</variation>
    <location>
        <position position="335"/>
    </location>
</feature>
<feature type="sequence variant" id="VAR_058694" description="In dbSNP:rs4586421.">
    <original>V</original>
    <variation>G</variation>
    <location>
        <position position="337"/>
    </location>
</feature>
<feature type="sequence variant" id="VAR_035247" description="In dbSNP:rs1133607." evidence="3 4 5">
    <original>S</original>
    <variation>L</variation>
    <location>
        <position position="513"/>
    </location>
</feature>
<feature type="sequence variant" id="VAR_035248" description="In dbSNP:rs1054977.">
    <original>A</original>
    <variation>T</variation>
    <location>
        <position position="561"/>
    </location>
</feature>
<feature type="sequence conflict" description="In Ref. 1; BAG53201, 3; AAI25177 and 4; AAC23497." evidence="8" ref="1 3 4">
    <original>N</original>
    <variation>D</variation>
    <location>
        <position position="463"/>
    </location>
</feature>
<feature type="turn" evidence="9">
    <location>
        <begin position="34"/>
        <end position="36"/>
    </location>
</feature>
<feature type="helix" evidence="10">
    <location>
        <begin position="46"/>
        <end position="49"/>
    </location>
</feature>
<feature type="helix" evidence="10">
    <location>
        <begin position="51"/>
        <end position="59"/>
    </location>
</feature>
<feature type="strand" evidence="10">
    <location>
        <begin position="67"/>
        <end position="72"/>
    </location>
</feature>
<feature type="strand" evidence="10">
    <location>
        <begin position="74"/>
        <end position="76"/>
    </location>
</feature>
<feature type="strand" evidence="10">
    <location>
        <begin position="78"/>
        <end position="82"/>
    </location>
</feature>
<feature type="helix" evidence="10">
    <location>
        <begin position="83"/>
        <end position="98"/>
    </location>
</feature>
<feature type="turn" evidence="10">
    <location>
        <begin position="99"/>
        <end position="101"/>
    </location>
</feature>
<feature type="strand" evidence="10">
    <location>
        <begin position="108"/>
        <end position="112"/>
    </location>
</feature>
<feature type="helix" evidence="10">
    <location>
        <begin position="117"/>
        <end position="129"/>
    </location>
</feature>
<feature type="strand" evidence="10">
    <location>
        <begin position="132"/>
        <end position="135"/>
    </location>
</feature>
<feature type="helix" evidence="10">
    <location>
        <begin position="142"/>
        <end position="152"/>
    </location>
</feature>
<feature type="strand" evidence="10">
    <location>
        <begin position="155"/>
        <end position="160"/>
    </location>
</feature>
<feature type="turn" evidence="10">
    <location>
        <begin position="161"/>
        <end position="163"/>
    </location>
</feature>
<feature type="helix" evidence="10">
    <location>
        <begin position="164"/>
        <end position="170"/>
    </location>
</feature>
<feature type="helix" evidence="10">
    <location>
        <begin position="171"/>
        <end position="173"/>
    </location>
</feature>
<feature type="strand" evidence="10">
    <location>
        <begin position="179"/>
        <end position="186"/>
    </location>
</feature>
<feature type="strand" evidence="10">
    <location>
        <begin position="191"/>
        <end position="193"/>
    </location>
</feature>
<feature type="helix" evidence="10">
    <location>
        <begin position="194"/>
        <end position="200"/>
    </location>
</feature>
<feature type="strand" evidence="10">
    <location>
        <begin position="214"/>
        <end position="220"/>
    </location>
</feature>
<feature type="strand" evidence="10">
    <location>
        <begin position="224"/>
        <end position="227"/>
    </location>
</feature>
<feature type="strand" evidence="10">
    <location>
        <begin position="230"/>
        <end position="234"/>
    </location>
</feature>
<feature type="helix" evidence="10">
    <location>
        <begin position="235"/>
        <end position="245"/>
    </location>
</feature>
<feature type="turn" evidence="10">
    <location>
        <begin position="246"/>
        <end position="249"/>
    </location>
</feature>
<feature type="strand" evidence="10">
    <location>
        <begin position="256"/>
        <end position="259"/>
    </location>
</feature>
<feature type="helix" evidence="10">
    <location>
        <begin position="266"/>
        <end position="271"/>
    </location>
</feature>
<feature type="helix" evidence="10">
    <location>
        <begin position="274"/>
        <end position="278"/>
    </location>
</feature>
<feature type="strand" evidence="10">
    <location>
        <begin position="282"/>
        <end position="286"/>
    </location>
</feature>
<feature type="helix" evidence="10">
    <location>
        <begin position="293"/>
        <end position="302"/>
    </location>
</feature>
<feature type="strand" evidence="10">
    <location>
        <begin position="307"/>
        <end position="310"/>
    </location>
</feature>
<feature type="helix" evidence="10">
    <location>
        <begin position="312"/>
        <end position="319"/>
    </location>
</feature>
<feature type="turn" evidence="10">
    <location>
        <begin position="323"/>
        <end position="325"/>
    </location>
</feature>
<feature type="strand" evidence="10">
    <location>
        <begin position="333"/>
        <end position="339"/>
    </location>
</feature>
<feature type="helix" evidence="10">
    <location>
        <begin position="343"/>
        <end position="353"/>
    </location>
</feature>
<feature type="strand" evidence="10">
    <location>
        <begin position="358"/>
        <end position="363"/>
    </location>
</feature>
<feature type="turn" evidence="10">
    <location>
        <begin position="364"/>
        <end position="366"/>
    </location>
</feature>
<feature type="strand" evidence="10">
    <location>
        <begin position="367"/>
        <end position="371"/>
    </location>
</feature>
<feature type="strand" evidence="10">
    <location>
        <begin position="392"/>
        <end position="395"/>
    </location>
</feature>
<feature type="strand" evidence="10">
    <location>
        <begin position="408"/>
        <end position="413"/>
    </location>
</feature>
<feature type="strand" evidence="10">
    <location>
        <begin position="415"/>
        <end position="417"/>
    </location>
</feature>
<feature type="helix" evidence="10">
    <location>
        <begin position="430"/>
        <end position="435"/>
    </location>
</feature>
<feature type="strand" evidence="10">
    <location>
        <begin position="441"/>
        <end position="450"/>
    </location>
</feature>
<feature type="strand" evidence="10">
    <location>
        <begin position="456"/>
        <end position="461"/>
    </location>
</feature>
<feature type="helix" evidence="10">
    <location>
        <begin position="462"/>
        <end position="464"/>
    </location>
</feature>
<feature type="strand" evidence="10">
    <location>
        <begin position="466"/>
        <end position="468"/>
    </location>
</feature>
<feature type="strand" evidence="10">
    <location>
        <begin position="471"/>
        <end position="473"/>
    </location>
</feature>
<feature type="helix" evidence="10">
    <location>
        <begin position="475"/>
        <end position="483"/>
    </location>
</feature>
<feature type="strand" evidence="10">
    <location>
        <begin position="488"/>
        <end position="498"/>
    </location>
</feature>
<feature type="turn" evidence="10">
    <location>
        <begin position="499"/>
        <end position="501"/>
    </location>
</feature>
<feature type="strand" evidence="10">
    <location>
        <begin position="502"/>
        <end position="511"/>
    </location>
</feature>
<feature type="helix" evidence="10">
    <location>
        <begin position="513"/>
        <end position="515"/>
    </location>
</feature>
<feature type="helix" evidence="10">
    <location>
        <begin position="520"/>
        <end position="534"/>
    </location>
</feature>
<feature type="helix" evidence="10">
    <location>
        <begin position="537"/>
        <end position="539"/>
    </location>
</feature>
<feature type="strand" evidence="10">
    <location>
        <begin position="542"/>
        <end position="548"/>
    </location>
</feature>
<feature type="helix" evidence="10">
    <location>
        <begin position="560"/>
        <end position="567"/>
    </location>
</feature>
<reference key="1">
    <citation type="journal article" date="2004" name="Nat. Genet.">
        <title>Complete sequencing and characterization of 21,243 full-length human cDNAs.</title>
        <authorList>
            <person name="Ota T."/>
            <person name="Suzuki Y."/>
            <person name="Nishikawa T."/>
            <person name="Otsuki T."/>
            <person name="Sugiyama T."/>
            <person name="Irie R."/>
            <person name="Wakamatsu A."/>
            <person name="Hayashi K."/>
            <person name="Sato H."/>
            <person name="Nagai K."/>
            <person name="Kimura K."/>
            <person name="Makita H."/>
            <person name="Sekine M."/>
            <person name="Obayashi M."/>
            <person name="Nishi T."/>
            <person name="Shibahara T."/>
            <person name="Tanaka T."/>
            <person name="Ishii S."/>
            <person name="Yamamoto J."/>
            <person name="Saito K."/>
            <person name="Kawai Y."/>
            <person name="Isono Y."/>
            <person name="Nakamura Y."/>
            <person name="Nagahari K."/>
            <person name="Murakami K."/>
            <person name="Yasuda T."/>
            <person name="Iwayanagi T."/>
            <person name="Wagatsuma M."/>
            <person name="Shiratori A."/>
            <person name="Sudo H."/>
            <person name="Hosoiri T."/>
            <person name="Kaku Y."/>
            <person name="Kodaira H."/>
            <person name="Kondo H."/>
            <person name="Sugawara M."/>
            <person name="Takahashi M."/>
            <person name="Kanda K."/>
            <person name="Yokoi T."/>
            <person name="Furuya T."/>
            <person name="Kikkawa E."/>
            <person name="Omura Y."/>
            <person name="Abe K."/>
            <person name="Kamihara K."/>
            <person name="Katsuta N."/>
            <person name="Sato K."/>
            <person name="Tanikawa M."/>
            <person name="Yamazaki M."/>
            <person name="Ninomiya K."/>
            <person name="Ishibashi T."/>
            <person name="Yamashita H."/>
            <person name="Murakawa K."/>
            <person name="Fujimori K."/>
            <person name="Tanai H."/>
            <person name="Kimata M."/>
            <person name="Watanabe M."/>
            <person name="Hiraoka S."/>
            <person name="Chiba Y."/>
            <person name="Ishida S."/>
            <person name="Ono Y."/>
            <person name="Takiguchi S."/>
            <person name="Watanabe S."/>
            <person name="Yosida M."/>
            <person name="Hotuta T."/>
            <person name="Kusano J."/>
            <person name="Kanehori K."/>
            <person name="Takahashi-Fujii A."/>
            <person name="Hara H."/>
            <person name="Tanase T.-O."/>
            <person name="Nomura Y."/>
            <person name="Togiya S."/>
            <person name="Komai F."/>
            <person name="Hara R."/>
            <person name="Takeuchi K."/>
            <person name="Arita M."/>
            <person name="Imose N."/>
            <person name="Musashino K."/>
            <person name="Yuuki H."/>
            <person name="Oshima A."/>
            <person name="Sasaki N."/>
            <person name="Aotsuka S."/>
            <person name="Yoshikawa Y."/>
            <person name="Matsunawa H."/>
            <person name="Ichihara T."/>
            <person name="Shiohata N."/>
            <person name="Sano S."/>
            <person name="Moriya S."/>
            <person name="Momiyama H."/>
            <person name="Satoh N."/>
            <person name="Takami S."/>
            <person name="Terashima Y."/>
            <person name="Suzuki O."/>
            <person name="Nakagawa S."/>
            <person name="Senoh A."/>
            <person name="Mizoguchi H."/>
            <person name="Goto Y."/>
            <person name="Shimizu F."/>
            <person name="Wakebe H."/>
            <person name="Hishigaki H."/>
            <person name="Watanabe T."/>
            <person name="Sugiyama A."/>
            <person name="Takemoto M."/>
            <person name="Kawakami B."/>
            <person name="Yamazaki M."/>
            <person name="Watanabe K."/>
            <person name="Kumagai A."/>
            <person name="Itakura S."/>
            <person name="Fukuzumi Y."/>
            <person name="Fujimori Y."/>
            <person name="Komiyama M."/>
            <person name="Tashiro H."/>
            <person name="Tanigami A."/>
            <person name="Fujiwara T."/>
            <person name="Ono T."/>
            <person name="Yamada K."/>
            <person name="Fujii Y."/>
            <person name="Ozaki K."/>
            <person name="Hirao M."/>
            <person name="Ohmori Y."/>
            <person name="Kawabata A."/>
            <person name="Hikiji T."/>
            <person name="Kobatake N."/>
            <person name="Inagaki H."/>
            <person name="Ikema Y."/>
            <person name="Okamoto S."/>
            <person name="Okitani R."/>
            <person name="Kawakami T."/>
            <person name="Noguchi S."/>
            <person name="Itoh T."/>
            <person name="Shigeta K."/>
            <person name="Senba T."/>
            <person name="Matsumura K."/>
            <person name="Nakajima Y."/>
            <person name="Mizuno T."/>
            <person name="Morinaga M."/>
            <person name="Sasaki M."/>
            <person name="Togashi T."/>
            <person name="Oyama M."/>
            <person name="Hata H."/>
            <person name="Watanabe M."/>
            <person name="Komatsu T."/>
            <person name="Mizushima-Sugano J."/>
            <person name="Satoh T."/>
            <person name="Shirai Y."/>
            <person name="Takahashi Y."/>
            <person name="Nakagawa K."/>
            <person name="Okumura K."/>
            <person name="Nagase T."/>
            <person name="Nomura N."/>
            <person name="Kikuchi H."/>
            <person name="Masuho Y."/>
            <person name="Yamashita R."/>
            <person name="Nakai K."/>
            <person name="Yada T."/>
            <person name="Nakamura Y."/>
            <person name="Ohara O."/>
            <person name="Isogai T."/>
            <person name="Sugano S."/>
        </authorList>
    </citation>
    <scope>NUCLEOTIDE SEQUENCE [LARGE SCALE MRNA]</scope>
    <source>
        <tissue>Kidney</tissue>
    </source>
</reference>
<reference key="2">
    <citation type="journal article" date="2004" name="Nature">
        <title>The sequence and analysis of duplication-rich human chromosome 16.</title>
        <authorList>
            <person name="Martin J."/>
            <person name="Han C."/>
            <person name="Gordon L.A."/>
            <person name="Terry A."/>
            <person name="Prabhakar S."/>
            <person name="She X."/>
            <person name="Xie G."/>
            <person name="Hellsten U."/>
            <person name="Chan Y.M."/>
            <person name="Altherr M."/>
            <person name="Couronne O."/>
            <person name="Aerts A."/>
            <person name="Bajorek E."/>
            <person name="Black S."/>
            <person name="Blumer H."/>
            <person name="Branscomb E."/>
            <person name="Brown N.C."/>
            <person name="Bruno W.J."/>
            <person name="Buckingham J.M."/>
            <person name="Callen D.F."/>
            <person name="Campbell C.S."/>
            <person name="Campbell M.L."/>
            <person name="Campbell E.W."/>
            <person name="Caoile C."/>
            <person name="Challacombe J.F."/>
            <person name="Chasteen L.A."/>
            <person name="Chertkov O."/>
            <person name="Chi H.C."/>
            <person name="Christensen M."/>
            <person name="Clark L.M."/>
            <person name="Cohn J.D."/>
            <person name="Denys M."/>
            <person name="Detter J.C."/>
            <person name="Dickson M."/>
            <person name="Dimitrijevic-Bussod M."/>
            <person name="Escobar J."/>
            <person name="Fawcett J.J."/>
            <person name="Flowers D."/>
            <person name="Fotopulos D."/>
            <person name="Glavina T."/>
            <person name="Gomez M."/>
            <person name="Gonzales E."/>
            <person name="Goodstein D."/>
            <person name="Goodwin L.A."/>
            <person name="Grady D.L."/>
            <person name="Grigoriev I."/>
            <person name="Groza M."/>
            <person name="Hammon N."/>
            <person name="Hawkins T."/>
            <person name="Haydu L."/>
            <person name="Hildebrand C.E."/>
            <person name="Huang W."/>
            <person name="Israni S."/>
            <person name="Jett J."/>
            <person name="Jewett P.B."/>
            <person name="Kadner K."/>
            <person name="Kimball H."/>
            <person name="Kobayashi A."/>
            <person name="Krawczyk M.-C."/>
            <person name="Leyba T."/>
            <person name="Longmire J.L."/>
            <person name="Lopez F."/>
            <person name="Lou Y."/>
            <person name="Lowry S."/>
            <person name="Ludeman T."/>
            <person name="Manohar C.F."/>
            <person name="Mark G.A."/>
            <person name="McMurray K.L."/>
            <person name="Meincke L.J."/>
            <person name="Morgan J."/>
            <person name="Moyzis R.K."/>
            <person name="Mundt M.O."/>
            <person name="Munk A.C."/>
            <person name="Nandkeshwar R.D."/>
            <person name="Pitluck S."/>
            <person name="Pollard M."/>
            <person name="Predki P."/>
            <person name="Parson-Quintana B."/>
            <person name="Ramirez L."/>
            <person name="Rash S."/>
            <person name="Retterer J."/>
            <person name="Ricke D.O."/>
            <person name="Robinson D.L."/>
            <person name="Rodriguez A."/>
            <person name="Salamov A."/>
            <person name="Saunders E.H."/>
            <person name="Scott D."/>
            <person name="Shough T."/>
            <person name="Stallings R.L."/>
            <person name="Stalvey M."/>
            <person name="Sutherland R.D."/>
            <person name="Tapia R."/>
            <person name="Tesmer J.G."/>
            <person name="Thayer N."/>
            <person name="Thompson L.S."/>
            <person name="Tice H."/>
            <person name="Torney D.C."/>
            <person name="Tran-Gyamfi M."/>
            <person name="Tsai M."/>
            <person name="Ulanovsky L.E."/>
            <person name="Ustaszewska A."/>
            <person name="Vo N."/>
            <person name="White P.S."/>
            <person name="Williams A.L."/>
            <person name="Wills P.L."/>
            <person name="Wu J.-R."/>
            <person name="Wu K."/>
            <person name="Yang J."/>
            <person name="DeJong P."/>
            <person name="Bruce D."/>
            <person name="Doggett N.A."/>
            <person name="Deaven L."/>
            <person name="Schmutz J."/>
            <person name="Grimwood J."/>
            <person name="Richardson P."/>
            <person name="Rokhsar D.S."/>
            <person name="Eichler E.E."/>
            <person name="Gilna P."/>
            <person name="Lucas S.M."/>
            <person name="Myers R.M."/>
            <person name="Rubin E.M."/>
            <person name="Pennacchio L.A."/>
        </authorList>
    </citation>
    <scope>NUCLEOTIDE SEQUENCE [LARGE SCALE GENOMIC DNA]</scope>
</reference>
<reference key="3">
    <citation type="journal article" date="2004" name="Genome Res.">
        <title>The status, quality, and expansion of the NIH full-length cDNA project: the Mammalian Gene Collection (MGC).</title>
        <authorList>
            <consortium name="The MGC Project Team"/>
        </authorList>
    </citation>
    <scope>NUCLEOTIDE SEQUENCE [LARGE SCALE MRNA]</scope>
</reference>
<reference key="4">
    <citation type="journal article" date="1999" name="Genomics">
        <title>Genome duplications and other features in 12 Mb of DNA sequence from human chromosome 16p and 16q.</title>
        <authorList>
            <person name="Loftus B.J."/>
            <person name="Kim U.-J."/>
            <person name="Sneddon V.P."/>
            <person name="Kalush F."/>
            <person name="Brandon R."/>
            <person name="Fuhrmann J."/>
            <person name="Mason T."/>
            <person name="Crosby M.L."/>
            <person name="Barnstead M."/>
            <person name="Cronin L."/>
            <person name="Mays A.D."/>
            <person name="Cao Y."/>
            <person name="Xu R.X."/>
            <person name="Kang H.-L."/>
            <person name="Mitchell S."/>
            <person name="Eichler E.E."/>
            <person name="Harris P.C."/>
            <person name="Venter J.C."/>
            <person name="Adams M.D."/>
        </authorList>
    </citation>
    <scope>NUCLEOTIDE SEQUENCE [LARGE SCALE GENOMIC DNA] OF 299-577</scope>
    <scope>VARIANT LEU-513</scope>
</reference>
<reference key="5">
    <citation type="journal article" date="2014" name="J. Proteomics">
        <title>An enzyme assisted RP-RPLC approach for in-depth analysis of human liver phosphoproteome.</title>
        <authorList>
            <person name="Bian Y."/>
            <person name="Song C."/>
            <person name="Cheng K."/>
            <person name="Dong M."/>
            <person name="Wang F."/>
            <person name="Huang J."/>
            <person name="Sun D."/>
            <person name="Wang L."/>
            <person name="Ye M."/>
            <person name="Zou H."/>
        </authorList>
    </citation>
    <scope>IDENTIFICATION BY MASS SPECTROMETRY [LARGE SCALE ANALYSIS]</scope>
    <source>
        <tissue>Liver</tissue>
    </source>
</reference>
<reference key="6">
    <citation type="journal article" date="2016" name="Expert Opin. Drug Metab. Toxicol.">
        <title>Xenobiotic/medium chain fatty acid: CoA ligase - a critical review on its role in fatty acid metabolism and the detoxification of benzoic acid and aspirin.</title>
        <authorList>
            <person name="van der Sluis R."/>
            <person name="Erasmus E."/>
        </authorList>
    </citation>
    <scope>REVIEW</scope>
</reference>
<reference key="7">
    <citation type="submission" date="2008-02" db="PDB data bank">
        <title>Crystal structure of L64P mutant of human acyl-CoA synthetase medium-chain family member 2A.</title>
        <authorList>
            <consortium name="Structural genomics consortium (SGC)"/>
        </authorList>
    </citation>
    <scope>X-RAY CRYSTALLOGRAPHY (1.6 ANGSTROMS) IN COMPLEX WITH AMP AND MAGNESIUM</scope>
</reference>
<reference key="8">
    <citation type="journal article" date="2009" name="J. Mol. Biol.">
        <title>Structural snapshots for the conformation-dependent catalysis by human medium-chain acyl-coenzyme A synthetase ACSM2A.</title>
        <authorList>
            <person name="Kochan G."/>
            <person name="Pilka E.S."/>
            <person name="von Delft F."/>
            <person name="Oppermann U."/>
            <person name="Yue W.W."/>
        </authorList>
    </citation>
    <scope>X-RAY CRYSTALLOGRAPHY (1.6 ANGSTROMS) OF 32-577 IN COMPLEXES WITH ATP; COENZYME A; IBUPROFEN AND MAGNESIUM</scope>
</reference>
<reference key="9">
    <citation type="journal article" date="2003" name="Hypertension">
        <title>An acyl-CoA synthetase gene family in chromosome 16p12 may contribute to multiple risk factors.</title>
        <authorList>
            <person name="Iwai N."/>
            <person name="Mannami T."/>
            <person name="Tomoike H."/>
            <person name="Ono K."/>
            <person name="Iwanaga Y."/>
        </authorList>
    </citation>
    <scope>VARIANT LEU-513</scope>
</reference>
<reference key="10">
    <citation type="journal article" date="2006" name="Mol. Nutr. Food Res.">
        <title>The L513S polymorphism in medium-chain acyl-CoA synthetase 2 (MACS2) is associated with risk factors of the metabolic syndrome in a Caucasian study population.</title>
        <authorList>
            <person name="Lindner I."/>
            <person name="Rubin D."/>
            <person name="Helwig U."/>
            <person name="Nitz I."/>
            <person name="Hampe J."/>
            <person name="Schreiber S."/>
            <person name="Schrezenmeir J."/>
            <person name="Doering F."/>
        </authorList>
    </citation>
    <scope>VARIANT LEU-513</scope>
</reference>
<protein>
    <recommendedName>
        <fullName>Acyl-coenzyme A synthetase ACSM2A, mitochondrial</fullName>
        <ecNumber evidence="1">6.2.1.2</ecNumber>
    </recommendedName>
    <alternativeName>
        <fullName>Acyl-CoA synthetase medium-chain family member 2A</fullName>
    </alternativeName>
    <alternativeName>
        <fullName>Benzoate--CoA ligase</fullName>
        <ecNumber evidence="1">6.2.1.25</ecNumber>
    </alternativeName>
    <alternativeName>
        <fullName>Butyrate--CoA ligase 2A</fullName>
    </alternativeName>
    <alternativeName>
        <fullName>Butyryl-coenzyme A synthetase 2A</fullName>
    </alternativeName>
    <alternativeName>
        <fullName>Middle-chain acyl-CoA synthetase 2A</fullName>
    </alternativeName>
</protein>
<sequence length="577" mass="64223">MHWLRKVQGLCTLWGTQMSSRTLYINSRQLVSLQWGHQEVPAKFNFASDVLDHWADMEKAGKRLPSPALWWVNGKGKELMWNFRELSENSQQAANVLSGACGLQRGDRVAVVLPRVPEWWLVILGCIRAGLIFMPGTIQMKSTDILYRLQMSKAKAIVAGDEVIQEVDTVASECPSLRIKLLVSEKSCDGWLNFKKLLNEASTTHHCVETGSQEASAIYFTSGTSGLPKMAEHSYSSLGLKAKMDAGWTGLQASDIMWTISDTGWILNILCSLMEPWALGACTFVHLLPKFDPLVILKTLSSYPIKSMMGAPIVYRMLLQQDLSSYKFPHLQNCVTVGESLLPETLENWRAQTGLDIRESYGQTETGLTCMVSKTMKIKPGYMGTAASCYDVQIIDDKGNVLPPGTEGDIGIRVKPIRPIGIFSGYVDNPDKTAANIRGDFWLLGDRGIKDEDGYFQFMGRANDIINSSGYRIGPSEVENALMEHPAVVETAVISSPDPVRGEVVKAFVVLASQFLSHDPEQLTKELQQHVKSVTAPYKYPRKIEFVLNLPKTVTGKIQRAKLRDKEWKMSGKARAQ</sequence>